<dbReference type="EC" id="2.1.1.107" evidence="1"/>
<dbReference type="EC" id="1.3.1.76" evidence="1"/>
<dbReference type="EC" id="4.99.1.4" evidence="1"/>
<dbReference type="EMBL" id="CP000468">
    <property type="protein sequence ID" value="ABJ02842.1"/>
    <property type="molecule type" value="Genomic_DNA"/>
</dbReference>
<dbReference type="RefSeq" id="WP_000349869.1">
    <property type="nucleotide sequence ID" value="NZ_CADILS010000059.1"/>
</dbReference>
<dbReference type="SMR" id="A1AGQ2"/>
<dbReference type="KEGG" id="ecv:APECO1_3088"/>
<dbReference type="HOGENOM" id="CLU_011276_2_0_6"/>
<dbReference type="UniPathway" id="UPA00148">
    <property type="reaction ID" value="UER00211"/>
</dbReference>
<dbReference type="UniPathway" id="UPA00148">
    <property type="reaction ID" value="UER00222"/>
</dbReference>
<dbReference type="UniPathway" id="UPA00262">
    <property type="reaction ID" value="UER00211"/>
</dbReference>
<dbReference type="UniPathway" id="UPA00262">
    <property type="reaction ID" value="UER00222"/>
</dbReference>
<dbReference type="UniPathway" id="UPA00262">
    <property type="reaction ID" value="UER00376"/>
</dbReference>
<dbReference type="Proteomes" id="UP000008216">
    <property type="component" value="Chromosome"/>
</dbReference>
<dbReference type="GO" id="GO:0051287">
    <property type="term" value="F:NAD binding"/>
    <property type="evidence" value="ECO:0007669"/>
    <property type="project" value="InterPro"/>
</dbReference>
<dbReference type="GO" id="GO:0043115">
    <property type="term" value="F:precorrin-2 dehydrogenase activity"/>
    <property type="evidence" value="ECO:0007669"/>
    <property type="project" value="UniProtKB-UniRule"/>
</dbReference>
<dbReference type="GO" id="GO:0051266">
    <property type="term" value="F:sirohydrochlorin ferrochelatase activity"/>
    <property type="evidence" value="ECO:0007669"/>
    <property type="project" value="UniProtKB-EC"/>
</dbReference>
<dbReference type="GO" id="GO:0004851">
    <property type="term" value="F:uroporphyrin-III C-methyltransferase activity"/>
    <property type="evidence" value="ECO:0007669"/>
    <property type="project" value="UniProtKB-UniRule"/>
</dbReference>
<dbReference type="GO" id="GO:0009236">
    <property type="term" value="P:cobalamin biosynthetic process"/>
    <property type="evidence" value="ECO:0007669"/>
    <property type="project" value="UniProtKB-UniRule"/>
</dbReference>
<dbReference type="GO" id="GO:0032259">
    <property type="term" value="P:methylation"/>
    <property type="evidence" value="ECO:0007669"/>
    <property type="project" value="UniProtKB-KW"/>
</dbReference>
<dbReference type="GO" id="GO:0019354">
    <property type="term" value="P:siroheme biosynthetic process"/>
    <property type="evidence" value="ECO:0007669"/>
    <property type="project" value="UniProtKB-UniRule"/>
</dbReference>
<dbReference type="CDD" id="cd11642">
    <property type="entry name" value="SUMT"/>
    <property type="match status" value="1"/>
</dbReference>
<dbReference type="FunFam" id="1.10.8.210:FF:000001">
    <property type="entry name" value="Siroheme synthase"/>
    <property type="match status" value="1"/>
</dbReference>
<dbReference type="FunFam" id="3.30.160.110:FF:000001">
    <property type="entry name" value="Siroheme synthase"/>
    <property type="match status" value="1"/>
</dbReference>
<dbReference type="FunFam" id="3.30.950.10:FF:000001">
    <property type="entry name" value="Siroheme synthase"/>
    <property type="match status" value="1"/>
</dbReference>
<dbReference type="FunFam" id="3.40.1010.10:FF:000001">
    <property type="entry name" value="Siroheme synthase"/>
    <property type="match status" value="1"/>
</dbReference>
<dbReference type="FunFam" id="3.40.50.720:FF:000092">
    <property type="entry name" value="Siroheme synthase"/>
    <property type="match status" value="1"/>
</dbReference>
<dbReference type="Gene3D" id="3.40.1010.10">
    <property type="entry name" value="Cobalt-precorrin-4 Transmethylase, Domain 1"/>
    <property type="match status" value="1"/>
</dbReference>
<dbReference type="Gene3D" id="3.30.950.10">
    <property type="entry name" value="Methyltransferase, Cobalt-precorrin-4 Transmethylase, Domain 2"/>
    <property type="match status" value="1"/>
</dbReference>
<dbReference type="Gene3D" id="3.40.50.720">
    <property type="entry name" value="NAD(P)-binding Rossmann-like Domain"/>
    <property type="match status" value="1"/>
</dbReference>
<dbReference type="Gene3D" id="1.10.8.210">
    <property type="entry name" value="Sirohaem synthase, dimerisation domain"/>
    <property type="match status" value="1"/>
</dbReference>
<dbReference type="Gene3D" id="3.30.160.110">
    <property type="entry name" value="Siroheme synthase, domain 2"/>
    <property type="match status" value="1"/>
</dbReference>
<dbReference type="HAMAP" id="MF_01646">
    <property type="entry name" value="Siroheme_synth"/>
    <property type="match status" value="1"/>
</dbReference>
<dbReference type="InterPro" id="IPR000878">
    <property type="entry name" value="4pyrrol_Mease"/>
</dbReference>
<dbReference type="InterPro" id="IPR035996">
    <property type="entry name" value="4pyrrol_Methylase_sf"/>
</dbReference>
<dbReference type="InterPro" id="IPR014777">
    <property type="entry name" value="4pyrrole_Mease_sub1"/>
</dbReference>
<dbReference type="InterPro" id="IPR014776">
    <property type="entry name" value="4pyrrole_Mease_sub2"/>
</dbReference>
<dbReference type="InterPro" id="IPR006366">
    <property type="entry name" value="CobA/CysG_C"/>
</dbReference>
<dbReference type="InterPro" id="IPR036291">
    <property type="entry name" value="NAD(P)-bd_dom_sf"/>
</dbReference>
<dbReference type="InterPro" id="IPR050161">
    <property type="entry name" value="Siro_Cobalamin_biosynth"/>
</dbReference>
<dbReference type="InterPro" id="IPR037115">
    <property type="entry name" value="Sirohaem_synt_dimer_dom_sf"/>
</dbReference>
<dbReference type="InterPro" id="IPR012409">
    <property type="entry name" value="Sirohaem_synth"/>
</dbReference>
<dbReference type="InterPro" id="IPR028281">
    <property type="entry name" value="Sirohaem_synthase_central"/>
</dbReference>
<dbReference type="InterPro" id="IPR019478">
    <property type="entry name" value="Sirohaem_synthase_dimer_dom"/>
</dbReference>
<dbReference type="InterPro" id="IPR006367">
    <property type="entry name" value="Sirohaem_synthase_N"/>
</dbReference>
<dbReference type="InterPro" id="IPR003043">
    <property type="entry name" value="Uropor_MeTrfase_CS"/>
</dbReference>
<dbReference type="NCBIfam" id="TIGR01469">
    <property type="entry name" value="cobA_cysG_Cterm"/>
    <property type="match status" value="1"/>
</dbReference>
<dbReference type="NCBIfam" id="TIGR01470">
    <property type="entry name" value="cysG_Nterm"/>
    <property type="match status" value="1"/>
</dbReference>
<dbReference type="NCBIfam" id="NF004790">
    <property type="entry name" value="PRK06136.1"/>
    <property type="match status" value="1"/>
</dbReference>
<dbReference type="NCBIfam" id="NF007922">
    <property type="entry name" value="PRK10637.1"/>
    <property type="match status" value="1"/>
</dbReference>
<dbReference type="PANTHER" id="PTHR45790:SF1">
    <property type="entry name" value="SIROHEME SYNTHASE"/>
    <property type="match status" value="1"/>
</dbReference>
<dbReference type="PANTHER" id="PTHR45790">
    <property type="entry name" value="SIROHEME SYNTHASE-RELATED"/>
    <property type="match status" value="1"/>
</dbReference>
<dbReference type="Pfam" id="PF10414">
    <property type="entry name" value="CysG_dimeriser"/>
    <property type="match status" value="1"/>
</dbReference>
<dbReference type="Pfam" id="PF13241">
    <property type="entry name" value="NAD_binding_7"/>
    <property type="match status" value="1"/>
</dbReference>
<dbReference type="Pfam" id="PF14824">
    <property type="entry name" value="Sirohm_synth_M"/>
    <property type="match status" value="1"/>
</dbReference>
<dbReference type="Pfam" id="PF00590">
    <property type="entry name" value="TP_methylase"/>
    <property type="match status" value="1"/>
</dbReference>
<dbReference type="PIRSF" id="PIRSF036426">
    <property type="entry name" value="Sirohaem_synth"/>
    <property type="match status" value="1"/>
</dbReference>
<dbReference type="SUPFAM" id="SSF51735">
    <property type="entry name" value="NAD(P)-binding Rossmann-fold domains"/>
    <property type="match status" value="1"/>
</dbReference>
<dbReference type="SUPFAM" id="SSF75615">
    <property type="entry name" value="Siroheme synthase middle domains-like"/>
    <property type="match status" value="1"/>
</dbReference>
<dbReference type="SUPFAM" id="SSF53790">
    <property type="entry name" value="Tetrapyrrole methylase"/>
    <property type="match status" value="1"/>
</dbReference>
<dbReference type="PROSITE" id="PS00839">
    <property type="entry name" value="SUMT_1"/>
    <property type="match status" value="1"/>
</dbReference>
<dbReference type="PROSITE" id="PS00840">
    <property type="entry name" value="SUMT_2"/>
    <property type="match status" value="1"/>
</dbReference>
<name>CYSG_ECOK1</name>
<accession>A1AGQ2</accession>
<comment type="function">
    <text evidence="1">Multifunctional enzyme that catalyzes the SAM-dependent methylations of uroporphyrinogen III at position C-2 and C-7 to form precorrin-2 via precorrin-1. Then it catalyzes the NAD-dependent ring dehydrogenation of precorrin-2 to yield sirohydrochlorin. Finally, it catalyzes the ferrochelation of sirohydrochlorin to yield siroheme.</text>
</comment>
<comment type="catalytic activity">
    <reaction evidence="1">
        <text>uroporphyrinogen III + 2 S-adenosyl-L-methionine = precorrin-2 + 2 S-adenosyl-L-homocysteine + H(+)</text>
        <dbReference type="Rhea" id="RHEA:32459"/>
        <dbReference type="ChEBI" id="CHEBI:15378"/>
        <dbReference type="ChEBI" id="CHEBI:57308"/>
        <dbReference type="ChEBI" id="CHEBI:57856"/>
        <dbReference type="ChEBI" id="CHEBI:58827"/>
        <dbReference type="ChEBI" id="CHEBI:59789"/>
        <dbReference type="EC" id="2.1.1.107"/>
    </reaction>
</comment>
<comment type="catalytic activity">
    <reaction evidence="1">
        <text>precorrin-2 + NAD(+) = sirohydrochlorin + NADH + 2 H(+)</text>
        <dbReference type="Rhea" id="RHEA:15613"/>
        <dbReference type="ChEBI" id="CHEBI:15378"/>
        <dbReference type="ChEBI" id="CHEBI:57540"/>
        <dbReference type="ChEBI" id="CHEBI:57945"/>
        <dbReference type="ChEBI" id="CHEBI:58351"/>
        <dbReference type="ChEBI" id="CHEBI:58827"/>
        <dbReference type="EC" id="1.3.1.76"/>
    </reaction>
</comment>
<comment type="catalytic activity">
    <reaction evidence="1">
        <text>siroheme + 2 H(+) = sirohydrochlorin + Fe(2+)</text>
        <dbReference type="Rhea" id="RHEA:24360"/>
        <dbReference type="ChEBI" id="CHEBI:15378"/>
        <dbReference type="ChEBI" id="CHEBI:29033"/>
        <dbReference type="ChEBI" id="CHEBI:58351"/>
        <dbReference type="ChEBI" id="CHEBI:60052"/>
        <dbReference type="EC" id="4.99.1.4"/>
    </reaction>
</comment>
<comment type="pathway">
    <text evidence="1">Cofactor biosynthesis; adenosylcobalamin biosynthesis; precorrin-2 from uroporphyrinogen III: step 1/1.</text>
</comment>
<comment type="pathway">
    <text evidence="1">Cofactor biosynthesis; adenosylcobalamin biosynthesis; sirohydrochlorin from precorrin-2: step 1/1.</text>
</comment>
<comment type="pathway">
    <text evidence="1">Porphyrin-containing compound metabolism; siroheme biosynthesis; precorrin-2 from uroporphyrinogen III: step 1/1.</text>
</comment>
<comment type="pathway">
    <text evidence="1">Porphyrin-containing compound metabolism; siroheme biosynthesis; siroheme from sirohydrochlorin: step 1/1.</text>
</comment>
<comment type="pathway">
    <text evidence="1">Porphyrin-containing compound metabolism; siroheme biosynthesis; sirohydrochlorin from precorrin-2: step 1/1.</text>
</comment>
<comment type="similarity">
    <text evidence="1">In the N-terminal section; belongs to the precorrin-2 dehydrogenase / sirohydrochlorin ferrochelatase family.</text>
</comment>
<comment type="similarity">
    <text evidence="1">In the C-terminal section; belongs to the precorrin methyltransferase family.</text>
</comment>
<organism>
    <name type="scientific">Escherichia coli O1:K1 / APEC</name>
    <dbReference type="NCBI Taxonomy" id="405955"/>
    <lineage>
        <taxon>Bacteria</taxon>
        <taxon>Pseudomonadati</taxon>
        <taxon>Pseudomonadota</taxon>
        <taxon>Gammaproteobacteria</taxon>
        <taxon>Enterobacterales</taxon>
        <taxon>Enterobacteriaceae</taxon>
        <taxon>Escherichia</taxon>
    </lineage>
</organism>
<gene>
    <name evidence="1" type="primary">cysG</name>
    <name type="ordered locus">Ecok1_33480</name>
    <name type="ORF">APECO1_3088</name>
</gene>
<evidence type="ECO:0000255" key="1">
    <source>
        <dbReference type="HAMAP-Rule" id="MF_01646"/>
    </source>
</evidence>
<feature type="chain" id="PRO_0000330509" description="Siroheme synthase">
    <location>
        <begin position="1"/>
        <end position="457"/>
    </location>
</feature>
<feature type="region of interest" description="Precorrin-2 dehydrogenase /sirohydrochlorin ferrochelatase" evidence="1">
    <location>
        <begin position="1"/>
        <end position="204"/>
    </location>
</feature>
<feature type="region of interest" description="Uroporphyrinogen-III C-methyltransferase" evidence="1">
    <location>
        <begin position="216"/>
        <end position="457"/>
    </location>
</feature>
<feature type="active site" description="Proton acceptor" evidence="1">
    <location>
        <position position="248"/>
    </location>
</feature>
<feature type="active site" description="Proton donor" evidence="1">
    <location>
        <position position="270"/>
    </location>
</feature>
<feature type="binding site" evidence="1">
    <location>
        <begin position="22"/>
        <end position="23"/>
    </location>
    <ligand>
        <name>NAD(+)</name>
        <dbReference type="ChEBI" id="CHEBI:57540"/>
    </ligand>
</feature>
<feature type="binding site" evidence="1">
    <location>
        <begin position="43"/>
        <end position="44"/>
    </location>
    <ligand>
        <name>NAD(+)</name>
        <dbReference type="ChEBI" id="CHEBI:57540"/>
    </ligand>
</feature>
<feature type="binding site" evidence="1">
    <location>
        <position position="225"/>
    </location>
    <ligand>
        <name>S-adenosyl-L-methionine</name>
        <dbReference type="ChEBI" id="CHEBI:59789"/>
    </ligand>
</feature>
<feature type="binding site" evidence="1">
    <location>
        <begin position="301"/>
        <end position="303"/>
    </location>
    <ligand>
        <name>S-adenosyl-L-methionine</name>
        <dbReference type="ChEBI" id="CHEBI:59789"/>
    </ligand>
</feature>
<feature type="binding site" evidence="1">
    <location>
        <position position="306"/>
    </location>
    <ligand>
        <name>S-adenosyl-L-methionine</name>
        <dbReference type="ChEBI" id="CHEBI:59789"/>
    </ligand>
</feature>
<feature type="binding site" evidence="1">
    <location>
        <begin position="331"/>
        <end position="332"/>
    </location>
    <ligand>
        <name>S-adenosyl-L-methionine</name>
        <dbReference type="ChEBI" id="CHEBI:59789"/>
    </ligand>
</feature>
<feature type="binding site" evidence="1">
    <location>
        <position position="382"/>
    </location>
    <ligand>
        <name>S-adenosyl-L-methionine</name>
        <dbReference type="ChEBI" id="CHEBI:59789"/>
    </ligand>
</feature>
<feature type="binding site" evidence="1">
    <location>
        <position position="411"/>
    </location>
    <ligand>
        <name>S-adenosyl-L-methionine</name>
        <dbReference type="ChEBI" id="CHEBI:59789"/>
    </ligand>
</feature>
<feature type="modified residue" description="Phosphoserine" evidence="1">
    <location>
        <position position="128"/>
    </location>
</feature>
<reference key="1">
    <citation type="journal article" date="2007" name="J. Bacteriol.">
        <title>The genome sequence of avian pathogenic Escherichia coli strain O1:K1:H7 shares strong similarities with human extraintestinal pathogenic E. coli genomes.</title>
        <authorList>
            <person name="Johnson T.J."/>
            <person name="Kariyawasam S."/>
            <person name="Wannemuehler Y."/>
            <person name="Mangiamele P."/>
            <person name="Johnson S.J."/>
            <person name="Doetkott C."/>
            <person name="Skyberg J.A."/>
            <person name="Lynne A.M."/>
            <person name="Johnson J.R."/>
            <person name="Nolan L.K."/>
        </authorList>
    </citation>
    <scope>NUCLEOTIDE SEQUENCE [LARGE SCALE GENOMIC DNA]</scope>
</reference>
<keyword id="KW-0169">Cobalamin biosynthesis</keyword>
<keyword id="KW-0456">Lyase</keyword>
<keyword id="KW-0489">Methyltransferase</keyword>
<keyword id="KW-0511">Multifunctional enzyme</keyword>
<keyword id="KW-0520">NAD</keyword>
<keyword id="KW-0560">Oxidoreductase</keyword>
<keyword id="KW-0597">Phosphoprotein</keyword>
<keyword id="KW-0627">Porphyrin biosynthesis</keyword>
<keyword id="KW-1185">Reference proteome</keyword>
<keyword id="KW-0949">S-adenosyl-L-methionine</keyword>
<keyword id="KW-0808">Transferase</keyword>
<protein>
    <recommendedName>
        <fullName evidence="1">Siroheme synthase</fullName>
    </recommendedName>
    <domain>
        <recommendedName>
            <fullName evidence="1">Uroporphyrinogen-III C-methyltransferase</fullName>
            <shortName evidence="1">Urogen III methylase</shortName>
            <ecNumber evidence="1">2.1.1.107</ecNumber>
        </recommendedName>
        <alternativeName>
            <fullName evidence="1">SUMT</fullName>
        </alternativeName>
        <alternativeName>
            <fullName evidence="1">Uroporphyrinogen III methylase</fullName>
            <shortName evidence="1">UROM</shortName>
        </alternativeName>
    </domain>
    <domain>
        <recommendedName>
            <fullName evidence="1">Precorrin-2 dehydrogenase</fullName>
            <ecNumber evidence="1">1.3.1.76</ecNumber>
        </recommendedName>
    </domain>
    <domain>
        <recommendedName>
            <fullName evidence="1">Sirohydrochlorin ferrochelatase</fullName>
            <ecNumber evidence="1">4.99.1.4</ecNumber>
        </recommendedName>
    </domain>
</protein>
<sequence length="457" mass="50007">MDHLPIFCQLRDRDCLIVGGGDVAERKARLLLDAGARLTVNALAFIPQFTAWADAGMLTLVEGPFDESLLDTCWLAIAATDDDALNQRVSEAAESRRIFCNVVDAPKAASFIMPSIIDRSPLMVAVSSGGTSPVLARLLREKLESLLPLHLGQVAKYAGQLRGRVKQQFATMGERRRFWEKLFVNDRLAQSLANNDQKAITETTEQLINEPLDHRGEVVLVGAGPGDAGLLTLKGLQQIQQADVVVYDRLVSDDIMNLIRRDADRVFVGKRAGYHCVPQEEINQILLREAQKGKRVVRLKGGDPFIFGRGGEELETLCNAGIPFSVVPGITAASGCSAYSGIPLTHRDYAQSVRLITGHLKTGGELDWENLAAEKQTLVFYMGLNQAATIQQKLIEYGMPGEMPVAIVENGTAVTQRVIDGTLTQLGELAQQMNSPSLIIIGRVVGLRDKLNWFSNH</sequence>
<proteinExistence type="inferred from homology"/>